<dbReference type="EMBL" id="CP000264">
    <property type="protein sequence ID" value="ABD54544.1"/>
    <property type="molecule type" value="Genomic_DNA"/>
</dbReference>
<dbReference type="RefSeq" id="WP_011454749.1">
    <property type="nucleotide sequence ID" value="NC_007802.1"/>
</dbReference>
<dbReference type="SMR" id="Q28RW8"/>
<dbReference type="STRING" id="290400.Jann_1627"/>
<dbReference type="KEGG" id="jan:Jann_1627"/>
<dbReference type="eggNOG" id="COG0236">
    <property type="taxonomic scope" value="Bacteria"/>
</dbReference>
<dbReference type="HOGENOM" id="CLU_108696_5_1_5"/>
<dbReference type="OrthoDB" id="9804551at2"/>
<dbReference type="UniPathway" id="UPA00094"/>
<dbReference type="Proteomes" id="UP000008326">
    <property type="component" value="Chromosome"/>
</dbReference>
<dbReference type="GO" id="GO:0005829">
    <property type="term" value="C:cytosol"/>
    <property type="evidence" value="ECO:0007669"/>
    <property type="project" value="TreeGrafter"/>
</dbReference>
<dbReference type="GO" id="GO:0016020">
    <property type="term" value="C:membrane"/>
    <property type="evidence" value="ECO:0007669"/>
    <property type="project" value="GOC"/>
</dbReference>
<dbReference type="GO" id="GO:0000035">
    <property type="term" value="F:acyl binding"/>
    <property type="evidence" value="ECO:0007669"/>
    <property type="project" value="TreeGrafter"/>
</dbReference>
<dbReference type="GO" id="GO:0000036">
    <property type="term" value="F:acyl carrier activity"/>
    <property type="evidence" value="ECO:0007669"/>
    <property type="project" value="UniProtKB-UniRule"/>
</dbReference>
<dbReference type="GO" id="GO:0031177">
    <property type="term" value="F:phosphopantetheine binding"/>
    <property type="evidence" value="ECO:0007669"/>
    <property type="project" value="InterPro"/>
</dbReference>
<dbReference type="GO" id="GO:0009245">
    <property type="term" value="P:lipid A biosynthetic process"/>
    <property type="evidence" value="ECO:0007669"/>
    <property type="project" value="TreeGrafter"/>
</dbReference>
<dbReference type="FunFam" id="1.10.1200.10:FF:000003">
    <property type="entry name" value="Acyl carrier protein"/>
    <property type="match status" value="1"/>
</dbReference>
<dbReference type="Gene3D" id="1.10.1200.10">
    <property type="entry name" value="ACP-like"/>
    <property type="match status" value="1"/>
</dbReference>
<dbReference type="HAMAP" id="MF_01217">
    <property type="entry name" value="Acyl_carrier"/>
    <property type="match status" value="1"/>
</dbReference>
<dbReference type="InterPro" id="IPR003231">
    <property type="entry name" value="ACP"/>
</dbReference>
<dbReference type="InterPro" id="IPR036736">
    <property type="entry name" value="ACP-like_sf"/>
</dbReference>
<dbReference type="InterPro" id="IPR020806">
    <property type="entry name" value="PKS_PP-bd"/>
</dbReference>
<dbReference type="InterPro" id="IPR009081">
    <property type="entry name" value="PP-bd_ACP"/>
</dbReference>
<dbReference type="InterPro" id="IPR006162">
    <property type="entry name" value="Ppantetheine_attach_site"/>
</dbReference>
<dbReference type="NCBIfam" id="TIGR00517">
    <property type="entry name" value="acyl_carrier"/>
    <property type="match status" value="1"/>
</dbReference>
<dbReference type="NCBIfam" id="NF002148">
    <property type="entry name" value="PRK00982.1-2"/>
    <property type="match status" value="1"/>
</dbReference>
<dbReference type="NCBIfam" id="NF002149">
    <property type="entry name" value="PRK00982.1-3"/>
    <property type="match status" value="1"/>
</dbReference>
<dbReference type="NCBIfam" id="NF002150">
    <property type="entry name" value="PRK00982.1-4"/>
    <property type="match status" value="1"/>
</dbReference>
<dbReference type="NCBIfam" id="NF002151">
    <property type="entry name" value="PRK00982.1-5"/>
    <property type="match status" value="1"/>
</dbReference>
<dbReference type="PANTHER" id="PTHR20863">
    <property type="entry name" value="ACYL CARRIER PROTEIN"/>
    <property type="match status" value="1"/>
</dbReference>
<dbReference type="PANTHER" id="PTHR20863:SF76">
    <property type="entry name" value="CARRIER DOMAIN-CONTAINING PROTEIN"/>
    <property type="match status" value="1"/>
</dbReference>
<dbReference type="Pfam" id="PF00550">
    <property type="entry name" value="PP-binding"/>
    <property type="match status" value="1"/>
</dbReference>
<dbReference type="SMART" id="SM00823">
    <property type="entry name" value="PKS_PP"/>
    <property type="match status" value="1"/>
</dbReference>
<dbReference type="SUPFAM" id="SSF47336">
    <property type="entry name" value="ACP-like"/>
    <property type="match status" value="1"/>
</dbReference>
<dbReference type="PROSITE" id="PS50075">
    <property type="entry name" value="CARRIER"/>
    <property type="match status" value="1"/>
</dbReference>
<dbReference type="PROSITE" id="PS00012">
    <property type="entry name" value="PHOSPHOPANTETHEINE"/>
    <property type="match status" value="1"/>
</dbReference>
<reference key="1">
    <citation type="submission" date="2006-02" db="EMBL/GenBank/DDBJ databases">
        <title>Complete sequence of chromosome of Jannaschia sp. CCS1.</title>
        <authorList>
            <consortium name="US DOE Joint Genome Institute"/>
            <person name="Copeland A."/>
            <person name="Lucas S."/>
            <person name="Lapidus A."/>
            <person name="Barry K."/>
            <person name="Detter J.C."/>
            <person name="Glavina del Rio T."/>
            <person name="Hammon N."/>
            <person name="Israni S."/>
            <person name="Pitluck S."/>
            <person name="Brettin T."/>
            <person name="Bruce D."/>
            <person name="Han C."/>
            <person name="Tapia R."/>
            <person name="Gilna P."/>
            <person name="Chertkov O."/>
            <person name="Saunders E."/>
            <person name="Schmutz J."/>
            <person name="Larimer F."/>
            <person name="Land M."/>
            <person name="Kyrpides N."/>
            <person name="Lykidis A."/>
            <person name="Moran M.A."/>
            <person name="Belas R."/>
            <person name="Ye W."/>
            <person name="Buchan A."/>
            <person name="Gonzalez J.M."/>
            <person name="Schell M.A."/>
            <person name="Richardson P."/>
        </authorList>
    </citation>
    <scope>NUCLEOTIDE SEQUENCE [LARGE SCALE GENOMIC DNA]</scope>
    <source>
        <strain>CCS1</strain>
    </source>
</reference>
<name>ACP_JANSC</name>
<proteinExistence type="inferred from homology"/>
<organism>
    <name type="scientific">Jannaschia sp. (strain CCS1)</name>
    <dbReference type="NCBI Taxonomy" id="290400"/>
    <lineage>
        <taxon>Bacteria</taxon>
        <taxon>Pseudomonadati</taxon>
        <taxon>Pseudomonadota</taxon>
        <taxon>Alphaproteobacteria</taxon>
        <taxon>Rhodobacterales</taxon>
        <taxon>Roseobacteraceae</taxon>
        <taxon>Jannaschia</taxon>
    </lineage>
</organism>
<accession>Q28RW8</accession>
<protein>
    <recommendedName>
        <fullName evidence="1">Acyl carrier protein</fullName>
        <shortName evidence="1">ACP</shortName>
    </recommendedName>
</protein>
<gene>
    <name evidence="1" type="primary">acpP</name>
    <name type="ordered locus">Jann_1627</name>
</gene>
<sequence length="77" mass="8406">MSDIAARVKKIVVEHLNVDEDKVVDSASFIDDLGADSLDTVELVMAFEEEFGIEIPDDAAETIQTFGDATKFISEAQ</sequence>
<feature type="chain" id="PRO_1000066627" description="Acyl carrier protein">
    <location>
        <begin position="1"/>
        <end position="77"/>
    </location>
</feature>
<feature type="domain" description="Carrier" evidence="2">
    <location>
        <begin position="2"/>
        <end position="77"/>
    </location>
</feature>
<feature type="modified residue" description="O-(pantetheine 4'-phosphoryl)serine" evidence="2">
    <location>
        <position position="37"/>
    </location>
</feature>
<keyword id="KW-0963">Cytoplasm</keyword>
<keyword id="KW-0275">Fatty acid biosynthesis</keyword>
<keyword id="KW-0276">Fatty acid metabolism</keyword>
<keyword id="KW-0444">Lipid biosynthesis</keyword>
<keyword id="KW-0443">Lipid metabolism</keyword>
<keyword id="KW-0596">Phosphopantetheine</keyword>
<keyword id="KW-0597">Phosphoprotein</keyword>
<keyword id="KW-1185">Reference proteome</keyword>
<comment type="function">
    <text evidence="1">Carrier of the growing fatty acid chain in fatty acid biosynthesis.</text>
</comment>
<comment type="pathway">
    <text evidence="1">Lipid metabolism; fatty acid biosynthesis.</text>
</comment>
<comment type="subcellular location">
    <subcellularLocation>
        <location evidence="1">Cytoplasm</location>
    </subcellularLocation>
</comment>
<comment type="PTM">
    <text evidence="1">4'-phosphopantetheine is transferred from CoA to a specific serine of apo-ACP by AcpS. This modification is essential for activity because fatty acids are bound in thioester linkage to the sulfhydryl of the prosthetic group.</text>
</comment>
<comment type="similarity">
    <text evidence="1">Belongs to the acyl carrier protein (ACP) family.</text>
</comment>
<evidence type="ECO:0000255" key="1">
    <source>
        <dbReference type="HAMAP-Rule" id="MF_01217"/>
    </source>
</evidence>
<evidence type="ECO:0000255" key="2">
    <source>
        <dbReference type="PROSITE-ProRule" id="PRU00258"/>
    </source>
</evidence>